<proteinExistence type="evidence at protein level"/>
<reference key="1">
    <citation type="journal article" date="2009" name="PLoS Biol.">
        <title>Lineage-specific biology revealed by a finished genome assembly of the mouse.</title>
        <authorList>
            <person name="Church D.M."/>
            <person name="Goodstadt L."/>
            <person name="Hillier L.W."/>
            <person name="Zody M.C."/>
            <person name="Goldstein S."/>
            <person name="She X."/>
            <person name="Bult C.J."/>
            <person name="Agarwala R."/>
            <person name="Cherry J.L."/>
            <person name="DiCuccio M."/>
            <person name="Hlavina W."/>
            <person name="Kapustin Y."/>
            <person name="Meric P."/>
            <person name="Maglott D."/>
            <person name="Birtle Z."/>
            <person name="Marques A.C."/>
            <person name="Graves T."/>
            <person name="Zhou S."/>
            <person name="Teague B."/>
            <person name="Potamousis K."/>
            <person name="Churas C."/>
            <person name="Place M."/>
            <person name="Herschleb J."/>
            <person name="Runnheim R."/>
            <person name="Forrest D."/>
            <person name="Amos-Landgraf J."/>
            <person name="Schwartz D.C."/>
            <person name="Cheng Z."/>
            <person name="Lindblad-Toh K."/>
            <person name="Eichler E.E."/>
            <person name="Ponting C.P."/>
        </authorList>
    </citation>
    <scope>NUCLEOTIDE SEQUENCE [LARGE SCALE GENOMIC DNA]</scope>
    <source>
        <strain>C57BL/6J</strain>
    </source>
</reference>
<reference key="2">
    <citation type="journal article" date="2005" name="Science">
        <title>The transcriptional landscape of the mammalian genome.</title>
        <authorList>
            <person name="Carninci P."/>
            <person name="Kasukawa T."/>
            <person name="Katayama S."/>
            <person name="Gough J."/>
            <person name="Frith M.C."/>
            <person name="Maeda N."/>
            <person name="Oyama R."/>
            <person name="Ravasi T."/>
            <person name="Lenhard B."/>
            <person name="Wells C."/>
            <person name="Kodzius R."/>
            <person name="Shimokawa K."/>
            <person name="Bajic V.B."/>
            <person name="Brenner S.E."/>
            <person name="Batalov S."/>
            <person name="Forrest A.R."/>
            <person name="Zavolan M."/>
            <person name="Davis M.J."/>
            <person name="Wilming L.G."/>
            <person name="Aidinis V."/>
            <person name="Allen J.E."/>
            <person name="Ambesi-Impiombato A."/>
            <person name="Apweiler R."/>
            <person name="Aturaliya R.N."/>
            <person name="Bailey T.L."/>
            <person name="Bansal M."/>
            <person name="Baxter L."/>
            <person name="Beisel K.W."/>
            <person name="Bersano T."/>
            <person name="Bono H."/>
            <person name="Chalk A.M."/>
            <person name="Chiu K.P."/>
            <person name="Choudhary V."/>
            <person name="Christoffels A."/>
            <person name="Clutterbuck D.R."/>
            <person name="Crowe M.L."/>
            <person name="Dalla E."/>
            <person name="Dalrymple B.P."/>
            <person name="de Bono B."/>
            <person name="Della Gatta G."/>
            <person name="di Bernardo D."/>
            <person name="Down T."/>
            <person name="Engstrom P."/>
            <person name="Fagiolini M."/>
            <person name="Faulkner G."/>
            <person name="Fletcher C.F."/>
            <person name="Fukushima T."/>
            <person name="Furuno M."/>
            <person name="Futaki S."/>
            <person name="Gariboldi M."/>
            <person name="Georgii-Hemming P."/>
            <person name="Gingeras T.R."/>
            <person name="Gojobori T."/>
            <person name="Green R.E."/>
            <person name="Gustincich S."/>
            <person name="Harbers M."/>
            <person name="Hayashi Y."/>
            <person name="Hensch T.K."/>
            <person name="Hirokawa N."/>
            <person name="Hill D."/>
            <person name="Huminiecki L."/>
            <person name="Iacono M."/>
            <person name="Ikeo K."/>
            <person name="Iwama A."/>
            <person name="Ishikawa T."/>
            <person name="Jakt M."/>
            <person name="Kanapin A."/>
            <person name="Katoh M."/>
            <person name="Kawasawa Y."/>
            <person name="Kelso J."/>
            <person name="Kitamura H."/>
            <person name="Kitano H."/>
            <person name="Kollias G."/>
            <person name="Krishnan S.P."/>
            <person name="Kruger A."/>
            <person name="Kummerfeld S.K."/>
            <person name="Kurochkin I.V."/>
            <person name="Lareau L.F."/>
            <person name="Lazarevic D."/>
            <person name="Lipovich L."/>
            <person name="Liu J."/>
            <person name="Liuni S."/>
            <person name="McWilliam S."/>
            <person name="Madan Babu M."/>
            <person name="Madera M."/>
            <person name="Marchionni L."/>
            <person name="Matsuda H."/>
            <person name="Matsuzawa S."/>
            <person name="Miki H."/>
            <person name="Mignone F."/>
            <person name="Miyake S."/>
            <person name="Morris K."/>
            <person name="Mottagui-Tabar S."/>
            <person name="Mulder N."/>
            <person name="Nakano N."/>
            <person name="Nakauchi H."/>
            <person name="Ng P."/>
            <person name="Nilsson R."/>
            <person name="Nishiguchi S."/>
            <person name="Nishikawa S."/>
            <person name="Nori F."/>
            <person name="Ohara O."/>
            <person name="Okazaki Y."/>
            <person name="Orlando V."/>
            <person name="Pang K.C."/>
            <person name="Pavan W.J."/>
            <person name="Pavesi G."/>
            <person name="Pesole G."/>
            <person name="Petrovsky N."/>
            <person name="Piazza S."/>
            <person name="Reed J."/>
            <person name="Reid J.F."/>
            <person name="Ring B.Z."/>
            <person name="Ringwald M."/>
            <person name="Rost B."/>
            <person name="Ruan Y."/>
            <person name="Salzberg S.L."/>
            <person name="Sandelin A."/>
            <person name="Schneider C."/>
            <person name="Schoenbach C."/>
            <person name="Sekiguchi K."/>
            <person name="Semple C.A."/>
            <person name="Seno S."/>
            <person name="Sessa L."/>
            <person name="Sheng Y."/>
            <person name="Shibata Y."/>
            <person name="Shimada H."/>
            <person name="Shimada K."/>
            <person name="Silva D."/>
            <person name="Sinclair B."/>
            <person name="Sperling S."/>
            <person name="Stupka E."/>
            <person name="Sugiura K."/>
            <person name="Sultana R."/>
            <person name="Takenaka Y."/>
            <person name="Taki K."/>
            <person name="Tammoja K."/>
            <person name="Tan S.L."/>
            <person name="Tang S."/>
            <person name="Taylor M.S."/>
            <person name="Tegner J."/>
            <person name="Teichmann S.A."/>
            <person name="Ueda H.R."/>
            <person name="van Nimwegen E."/>
            <person name="Verardo R."/>
            <person name="Wei C.L."/>
            <person name="Yagi K."/>
            <person name="Yamanishi H."/>
            <person name="Zabarovsky E."/>
            <person name="Zhu S."/>
            <person name="Zimmer A."/>
            <person name="Hide W."/>
            <person name="Bult C."/>
            <person name="Grimmond S.M."/>
            <person name="Teasdale R.D."/>
            <person name="Liu E.T."/>
            <person name="Brusic V."/>
            <person name="Quackenbush J."/>
            <person name="Wahlestedt C."/>
            <person name="Mattick J.S."/>
            <person name="Hume D.A."/>
            <person name="Kai C."/>
            <person name="Sasaki D."/>
            <person name="Tomaru Y."/>
            <person name="Fukuda S."/>
            <person name="Kanamori-Katayama M."/>
            <person name="Suzuki M."/>
            <person name="Aoki J."/>
            <person name="Arakawa T."/>
            <person name="Iida J."/>
            <person name="Imamura K."/>
            <person name="Itoh M."/>
            <person name="Kato T."/>
            <person name="Kawaji H."/>
            <person name="Kawagashira N."/>
            <person name="Kawashima T."/>
            <person name="Kojima M."/>
            <person name="Kondo S."/>
            <person name="Konno H."/>
            <person name="Nakano K."/>
            <person name="Ninomiya N."/>
            <person name="Nishio T."/>
            <person name="Okada M."/>
            <person name="Plessy C."/>
            <person name="Shibata K."/>
            <person name="Shiraki T."/>
            <person name="Suzuki S."/>
            <person name="Tagami M."/>
            <person name="Waki K."/>
            <person name="Watahiki A."/>
            <person name="Okamura-Oho Y."/>
            <person name="Suzuki H."/>
            <person name="Kawai J."/>
            <person name="Hayashizaki Y."/>
        </authorList>
    </citation>
    <scope>NUCLEOTIDE SEQUENCE [LARGE SCALE MRNA] (ISOFORM 2)</scope>
    <source>
        <strain>C57BL/6J</strain>
        <tissue>Eye</tissue>
    </source>
</reference>
<reference key="3">
    <citation type="journal article" date="2003" name="DNA Res.">
        <title>Prediction of the coding sequences of mouse homologues of KIAA gene: II. The complete nucleotide sequences of 400 mouse KIAA-homologous cDNAs identified by screening of terminal sequences of cDNA clones randomly sampled from size-fractionated libraries.</title>
        <authorList>
            <person name="Okazaki N."/>
            <person name="Kikuno R."/>
            <person name="Ohara R."/>
            <person name="Inamoto S."/>
            <person name="Aizawa H."/>
            <person name="Yuasa S."/>
            <person name="Nakajima D."/>
            <person name="Nagase T."/>
            <person name="Ohara O."/>
            <person name="Koga H."/>
        </authorList>
    </citation>
    <scope>NUCLEOTIDE SEQUENCE [LARGE SCALE MRNA] OF 1240-1810 (ISOFORM 1)</scope>
    <source>
        <tissue>Brain</tissue>
    </source>
</reference>
<reference key="4">
    <citation type="journal article" date="2010" name="Cell">
        <title>A tissue-specific atlas of mouse protein phosphorylation and expression.</title>
        <authorList>
            <person name="Huttlin E.L."/>
            <person name="Jedrychowski M.P."/>
            <person name="Elias J.E."/>
            <person name="Goswami T."/>
            <person name="Rad R."/>
            <person name="Beausoleil S.A."/>
            <person name="Villen J."/>
            <person name="Haas W."/>
            <person name="Sowa M.E."/>
            <person name="Gygi S.P."/>
        </authorList>
    </citation>
    <scope>PHOSPHORYLATION [LARGE SCALE ANALYSIS] AT SER-1409; THR-1426; SER-1438 AND THR-1441</scope>
    <scope>IDENTIFICATION BY MASS SPECTROMETRY [LARGE SCALE ANALYSIS]</scope>
    <source>
        <tissue>Brain</tissue>
        <tissue>Brown adipose tissue</tissue>
        <tissue>Heart</tissue>
        <tissue>Kidney</tissue>
        <tissue>Lung</tissue>
        <tissue>Pancreas</tissue>
        <tissue>Spleen</tissue>
        <tissue>Testis</tissue>
    </source>
</reference>
<organism>
    <name type="scientific">Mus musculus</name>
    <name type="common">Mouse</name>
    <dbReference type="NCBI Taxonomy" id="10090"/>
    <lineage>
        <taxon>Eukaryota</taxon>
        <taxon>Metazoa</taxon>
        <taxon>Chordata</taxon>
        <taxon>Craniata</taxon>
        <taxon>Vertebrata</taxon>
        <taxon>Euteleostomi</taxon>
        <taxon>Mammalia</taxon>
        <taxon>Eutheria</taxon>
        <taxon>Euarchontoglires</taxon>
        <taxon>Glires</taxon>
        <taxon>Rodentia</taxon>
        <taxon>Myomorpha</taxon>
        <taxon>Muroidea</taxon>
        <taxon>Muridae</taxon>
        <taxon>Murinae</taxon>
        <taxon>Mus</taxon>
        <taxon>Mus</taxon>
    </lineage>
</organism>
<name>TNR6B_MOUSE</name>
<comment type="function">
    <text evidence="2">Plays a role in RNA-mediated gene silencing by both micro-RNAs (miRNAs) and short interfering RNAs (siRNAs). Required for miRNA-dependent translational repression and siRNA-dependent endonucleolytic cleavage of complementary mRNAs by argonaute family proteins. As scaffolding protein associates with argonaute proteins bound to partially complementary mRNAs and simultaneously can recruit CCR4-NOT and PAN deadenylase complexes.</text>
</comment>
<comment type="subunit">
    <text evidence="2">Interacts with AGO1, AGO2, AGO3 and AGO4. Interacts with CNOT1; the interaction mediates the association with the CCR4-NOT complex. Interacts with PAN3; the interaction mediates the association with the PAN complex. Interacts with MOV10; the interaction is direct and RNA-dependent.</text>
</comment>
<comment type="subcellular location">
    <subcellularLocation>
        <location evidence="2">Cytoplasm</location>
        <location evidence="2">P-body</location>
    </subcellularLocation>
    <text evidence="2">Mammalian P-bodies are also known as GW bodies (GWBs).</text>
</comment>
<comment type="alternative products">
    <event type="alternative splicing"/>
    <isoform>
        <id>Q8BKI2-1</id>
        <name>1</name>
        <sequence type="displayed"/>
    </isoform>
    <isoform>
        <id>Q8BKI2-2</id>
        <name>2</name>
        <sequence type="described" ref="VSP_037294 VSP_037295 VSP_037296 VSP_037297"/>
    </isoform>
</comment>
<comment type="similarity">
    <text evidence="6">Belongs to the GW182 family.</text>
</comment>
<evidence type="ECO:0000250" key="1"/>
<evidence type="ECO:0000250" key="2">
    <source>
        <dbReference type="UniProtKB" id="Q9UPQ9"/>
    </source>
</evidence>
<evidence type="ECO:0000255" key="3"/>
<evidence type="ECO:0000256" key="4">
    <source>
        <dbReference type="SAM" id="MobiDB-lite"/>
    </source>
</evidence>
<evidence type="ECO:0000303" key="5">
    <source>
    </source>
</evidence>
<evidence type="ECO:0000305" key="6"/>
<evidence type="ECO:0007744" key="7">
    <source>
    </source>
</evidence>
<accession>Q8BKI2</accession>
<accession>Q80TK4</accession>
<gene>
    <name type="primary">Tnrc6b</name>
    <name type="synonym">Kiaa1093</name>
</gene>
<dbReference type="EMBL" id="AC125540">
    <property type="status" value="NOT_ANNOTATED_CDS"/>
    <property type="molecule type" value="Genomic_DNA"/>
</dbReference>
<dbReference type="EMBL" id="AC126682">
    <property type="status" value="NOT_ANNOTATED_CDS"/>
    <property type="molecule type" value="Genomic_DNA"/>
</dbReference>
<dbReference type="EMBL" id="AK051922">
    <property type="protein sequence ID" value="BAC34813.1"/>
    <property type="molecule type" value="mRNA"/>
</dbReference>
<dbReference type="EMBL" id="AK122440">
    <property type="protein sequence ID" value="BAC65722.1"/>
    <property type="molecule type" value="mRNA"/>
</dbReference>
<dbReference type="CCDS" id="CCDS37146.1">
    <molecule id="Q8BKI2-1"/>
</dbReference>
<dbReference type="RefSeq" id="NP_659061.2">
    <molecule id="Q8BKI2-1"/>
    <property type="nucleotide sequence ID" value="NM_144812.3"/>
</dbReference>
<dbReference type="SMR" id="Q8BKI2"/>
<dbReference type="BioGRID" id="229484">
    <property type="interactions" value="13"/>
</dbReference>
<dbReference type="DIP" id="DIP-48568N"/>
<dbReference type="FunCoup" id="Q8BKI2">
    <property type="interactions" value="2878"/>
</dbReference>
<dbReference type="IntAct" id="Q8BKI2">
    <property type="interactions" value="5"/>
</dbReference>
<dbReference type="MINT" id="Q8BKI2"/>
<dbReference type="STRING" id="10090.ENSMUSP00000064336"/>
<dbReference type="GlyGen" id="Q8BKI2">
    <property type="glycosylation" value="13 sites, 2 N-linked glycans (2 sites), 1 O-linked glycan (7 sites)"/>
</dbReference>
<dbReference type="iPTMnet" id="Q8BKI2"/>
<dbReference type="PhosphoSitePlus" id="Q8BKI2"/>
<dbReference type="jPOST" id="Q8BKI2"/>
<dbReference type="PaxDb" id="10090-ENSMUSP00000064336"/>
<dbReference type="PeptideAtlas" id="Q8BKI2"/>
<dbReference type="ProteomicsDB" id="260644">
    <molecule id="Q8BKI2-1"/>
</dbReference>
<dbReference type="ProteomicsDB" id="260645">
    <molecule id="Q8BKI2-2"/>
</dbReference>
<dbReference type="Pumba" id="Q8BKI2"/>
<dbReference type="Antibodypedia" id="294">
    <property type="antibodies" value="101 antibodies from 20 providers"/>
</dbReference>
<dbReference type="DNASU" id="213988"/>
<dbReference type="Ensembl" id="ENSMUST00000067689.9">
    <molecule id="Q8BKI2-1"/>
    <property type="protein sequence ID" value="ENSMUSP00000064336.8"/>
    <property type="gene ID" value="ENSMUSG00000047888.11"/>
</dbReference>
<dbReference type="GeneID" id="213988"/>
<dbReference type="KEGG" id="mmu:213988"/>
<dbReference type="UCSC" id="uc007wvt.1">
    <molecule id="Q8BKI2-1"/>
    <property type="organism name" value="mouse"/>
</dbReference>
<dbReference type="UCSC" id="uc007wvu.2">
    <molecule id="Q8BKI2-2"/>
    <property type="organism name" value="mouse"/>
</dbReference>
<dbReference type="AGR" id="MGI:2443730"/>
<dbReference type="CTD" id="23112"/>
<dbReference type="MGI" id="MGI:2443730">
    <property type="gene designation" value="Tnrc6b"/>
</dbReference>
<dbReference type="VEuPathDB" id="HostDB:ENSMUSG00000047888"/>
<dbReference type="eggNOG" id="ENOG502QQIH">
    <property type="taxonomic scope" value="Eukaryota"/>
</dbReference>
<dbReference type="GeneTree" id="ENSGT00940000155813"/>
<dbReference type="HOGENOM" id="CLU_001298_1_0_1"/>
<dbReference type="InParanoid" id="Q8BKI2"/>
<dbReference type="OMA" id="QPNSWNN"/>
<dbReference type="OrthoDB" id="5919166at2759"/>
<dbReference type="PhylomeDB" id="Q8BKI2"/>
<dbReference type="TreeFam" id="TF329702"/>
<dbReference type="Reactome" id="R-MMU-426496">
    <property type="pathway name" value="Post-transcriptional silencing by small RNAs"/>
</dbReference>
<dbReference type="BioGRID-ORCS" id="213988">
    <property type="hits" value="3 hits in 60 CRISPR screens"/>
</dbReference>
<dbReference type="ChiTaRS" id="Tnrc6b">
    <property type="organism name" value="mouse"/>
</dbReference>
<dbReference type="PRO" id="PR:Q8BKI2"/>
<dbReference type="Proteomes" id="UP000000589">
    <property type="component" value="Chromosome 15"/>
</dbReference>
<dbReference type="RNAct" id="Q8BKI2">
    <property type="molecule type" value="protein"/>
</dbReference>
<dbReference type="Bgee" id="ENSMUSG00000047888">
    <property type="expression patterns" value="Expressed in animal zygote and 235 other cell types or tissues"/>
</dbReference>
<dbReference type="ExpressionAtlas" id="Q8BKI2">
    <property type="expression patterns" value="baseline and differential"/>
</dbReference>
<dbReference type="GO" id="GO:0005829">
    <property type="term" value="C:cytosol"/>
    <property type="evidence" value="ECO:0000304"/>
    <property type="project" value="Reactome"/>
</dbReference>
<dbReference type="GO" id="GO:0000932">
    <property type="term" value="C:P-body"/>
    <property type="evidence" value="ECO:0007669"/>
    <property type="project" value="UniProtKB-SubCell"/>
</dbReference>
<dbReference type="GO" id="GO:0003723">
    <property type="term" value="F:RNA binding"/>
    <property type="evidence" value="ECO:0007669"/>
    <property type="project" value="UniProtKB-KW"/>
</dbReference>
<dbReference type="GO" id="GO:0035278">
    <property type="term" value="P:miRNA-mediated gene silencing by inhibition of translation"/>
    <property type="evidence" value="ECO:0000250"/>
    <property type="project" value="UniProtKB"/>
</dbReference>
<dbReference type="GO" id="GO:1900153">
    <property type="term" value="P:positive regulation of nuclear-transcribed mRNA catabolic process, deadenylation-dependent decay"/>
    <property type="evidence" value="ECO:0007669"/>
    <property type="project" value="Ensembl"/>
</dbReference>
<dbReference type="GO" id="GO:0060213">
    <property type="term" value="P:positive regulation of nuclear-transcribed mRNA poly(A) tail shortening"/>
    <property type="evidence" value="ECO:0007669"/>
    <property type="project" value="Ensembl"/>
</dbReference>
<dbReference type="CDD" id="cd12712">
    <property type="entry name" value="RRM_TNRC6B"/>
    <property type="match status" value="1"/>
</dbReference>
<dbReference type="FunFam" id="3.30.70.330:FF:000011">
    <property type="entry name" value="trinucleotide repeat-containing gene 6A protein-like"/>
    <property type="match status" value="1"/>
</dbReference>
<dbReference type="Gene3D" id="3.30.70.330">
    <property type="match status" value="1"/>
</dbReference>
<dbReference type="InterPro" id="IPR019486">
    <property type="entry name" value="Argonaute_hook_dom"/>
</dbReference>
<dbReference type="InterPro" id="IPR052068">
    <property type="entry name" value="GW182_domain"/>
</dbReference>
<dbReference type="InterPro" id="IPR012677">
    <property type="entry name" value="Nucleotide-bd_a/b_plait_sf"/>
</dbReference>
<dbReference type="InterPro" id="IPR035979">
    <property type="entry name" value="RBD_domain_sf"/>
</dbReference>
<dbReference type="InterPro" id="IPR032226">
    <property type="entry name" value="TNRC6_PABC-bd"/>
</dbReference>
<dbReference type="InterPro" id="IPR034925">
    <property type="entry name" value="TNRC6B_RRM"/>
</dbReference>
<dbReference type="PANTHER" id="PTHR13020">
    <property type="entry name" value="TRINUCLEOTIDE REPEAT-CONTAINING GENE 6"/>
    <property type="match status" value="1"/>
</dbReference>
<dbReference type="PANTHER" id="PTHR13020:SF32">
    <property type="entry name" value="TRINUCLEOTIDE REPEAT-CONTAINING GENE 6B PROTEIN"/>
    <property type="match status" value="1"/>
</dbReference>
<dbReference type="Pfam" id="PF10427">
    <property type="entry name" value="Ago_hook"/>
    <property type="match status" value="1"/>
</dbReference>
<dbReference type="Pfam" id="PF16608">
    <property type="entry name" value="TNRC6-PABC_bdg"/>
    <property type="match status" value="1"/>
</dbReference>
<dbReference type="SUPFAM" id="SSF54928">
    <property type="entry name" value="RNA-binding domain, RBD"/>
    <property type="match status" value="1"/>
</dbReference>
<keyword id="KW-0025">Alternative splicing</keyword>
<keyword id="KW-0175">Coiled coil</keyword>
<keyword id="KW-0963">Cytoplasm</keyword>
<keyword id="KW-0597">Phosphoprotein</keyword>
<keyword id="KW-1185">Reference proteome</keyword>
<keyword id="KW-0694">RNA-binding</keyword>
<keyword id="KW-0943">RNA-mediated gene silencing</keyword>
<keyword id="KW-0810">Translation regulation</keyword>
<protein>
    <recommendedName>
        <fullName>Trinucleotide repeat-containing gene 6B protein</fullName>
    </recommendedName>
</protein>
<sequence>MQTNEGEVEEESSSQVEQEDFVMEGHGKTPPPGEESKQEKEQEREEQLMEDKKRKKEDKKKKEATQKVTEQKTKVPEVTKPSLSQPTAASPIGSSPSPPVNGGNNAKRVAVPNGQPPSAARYMPREVPPRFRCQQDHKVLLKRGQPPPPSCMLLGGGAGPPPCTAPGANPNNNAQVTGALLQSESGTAPESTLGGAAASNYANSTWGPGASSNSGASPNPIHIWDKVIVDGSDMEEWPCIASKDTESSSENTTDNNSASNPGSEKSSLPGSTTSNKGKGSQCQAASSGNECNLGVWKSDPKAKSVQPPNSTSDSNNGLGNWRSTSGQDRIGPGSGFSNFNPNSNPSAWPALVQEGTSRKGALETESSSSSAQVSTVGQASREQQSKMENAGVNFVVSGREQAQIHNTDGPKNGNTNSLNLSSPNPMENKGMPFGMGLGNTSRSTDAPSQSTGDRKTGSVGSWGAARGPSGTDTVSGQSNSGNNGNNGKDREDSWKGASVPKPTGSKSDSWDNNNRSTGGSWNFGPQDNNDNKWGEGNKMTSGVSQGEWKQPTGSDELKIGEWSGPNQPNSSTGAWDNQKGHPLPENQGNAQAPCWGRSSSSAGSEVGGQSTGSNHKAGSSDSHNSGRRSYRPTHPDCQAVLQTLLSRTDLDPRVLSNTGWGQTQIKQDTVWDIEEVPRPEGKSDKGTEGWESAATQTKNSGGWGDAPSQSNQMKSGWGELSASTEWKDPKSTGGWNDYKNNNSSNWGGGRADEKTPSSWNESSCKDQGWGGGRQPNQGWTSGKNGWGEEVDQVKNNNWESSANKPVSGWGEGGQNEIGTWGNGGNTNLASKGGWEDCKRSPAWNETGRQPNSWNKQHQQQQQPPPPQPEASGSWGGPPPPPQGNVRPSNSNWSSGPQPTTPKDDEPSGWEEPSPQSISRKMDIDDGTSAWGDPNSYNYKNVNLWDKNSQGGPAPREPNLPTPMTGKSASVWSKSTPPAPDNGTSAWGEPNESSPGWGEMDDAGASTTGWGNTPANAPNAMKPNSKSMQDGWGESDGPVTGARHPSWEEEDDGGVWNTAGSQGSTSSHNSASWGQGGKKQMKCSLKGGNNDSWMNPLAKQFSNMGLLSQTEDNPSSKMDLSVDKKFDVDKRTMNLGDFNDIMRKDRPGFRPPNSKDLGTTDSGPYFEKGGSHGLFGNSTAQSRGLHTPVQPLSSSPGLRAQVPPQFISPQVSASMLKQFPNSGLNPGLFNVGPQLSPQQIAMLSQLPQIPQFQLACQLLLQQQQQQQQLLQNQRKISQAVRQQQEQQLARMVSALQQQQQQQQQQQRQPSMKHSPSHPVGPKPHLDNMVPNALNVGLPDLPTKGPIPGYGSGFSSGGMDYGMVGGKEAGTESRFKQWTSMMEGLPSVATQEATMHKNGAIVAPGKTRGGSPYNQFDIIPGDTLGGHTGPAGDSWLPAKSPPTNKIGSKSSNASWPPEFQPGVPWKGIQNIDPESDPYVTPGSVLGGTTTSPIVDTDHQLLRDNTTGSNSSLNTSLPSPGAWPYSASDNSFTNVHSTSAKFPDYKSTWSPDPIGHNPTHLSNKMWKNHISSRNTTPLTRPPPGLTNPKPASPWSSTAPRSVRGWGTQDSRIASASTWSDGGSVRPSYWLVLHNLTPQIDGSTLRTICMQHGPLLTFHLNLTQGTALIRYSTKQEAAKAQTALHMCVLGNTTILAEFATEDEVSRFLAQAQPPTPAATPSAPATGWQSLETSQNQADPVGPALNLFGGSTGLGQWSSSAGGSSGADLAGTSLWGPPNYSSSLWGVPTVEDPHRMGSPAPLLPGDLLGGGSDSI</sequence>
<feature type="chain" id="PRO_0000373981" description="Trinucleotide repeat-containing gene 6B protein">
    <location>
        <begin position="1"/>
        <end position="1810"/>
    </location>
</feature>
<feature type="domain" description="RRM">
    <location>
        <begin position="1625"/>
        <end position="1697"/>
    </location>
</feature>
<feature type="region of interest" description="Disordered" evidence="4">
    <location>
        <begin position="1"/>
        <end position="221"/>
    </location>
</feature>
<feature type="region of interest" description="Interaction with argonaute proteins" evidence="1">
    <location>
        <begin position="37"/>
        <end position="1028"/>
    </location>
</feature>
<feature type="region of interest" description="Disordered" evidence="4">
    <location>
        <begin position="235"/>
        <end position="1080"/>
    </location>
</feature>
<feature type="region of interest" description="Disordered" evidence="4">
    <location>
        <begin position="1141"/>
        <end position="1196"/>
    </location>
</feature>
<feature type="region of interest" description="Silencing domain; interaction with CNOT1 and PAN3" evidence="1">
    <location>
        <begin position="1191"/>
        <end position="1700"/>
    </location>
</feature>
<feature type="region of interest" description="Disordered" evidence="4">
    <location>
        <begin position="1293"/>
        <end position="1329"/>
    </location>
</feature>
<feature type="region of interest" description="PABPC1-interacting motif-2 (PAM2)" evidence="1">
    <location>
        <begin position="1449"/>
        <end position="1467"/>
    </location>
</feature>
<feature type="region of interest" description="Disordered" evidence="4">
    <location>
        <begin position="1568"/>
        <end position="1619"/>
    </location>
</feature>
<feature type="region of interest" description="Disordered" evidence="4">
    <location>
        <begin position="1706"/>
        <end position="1740"/>
    </location>
</feature>
<feature type="region of interest" description="Disordered" evidence="4">
    <location>
        <begin position="1786"/>
        <end position="1810"/>
    </location>
</feature>
<feature type="coiled-coil region" evidence="3">
    <location>
        <begin position="33"/>
        <end position="75"/>
    </location>
</feature>
<feature type="compositionally biased region" description="Acidic residues" evidence="4">
    <location>
        <begin position="1"/>
        <end position="22"/>
    </location>
</feature>
<feature type="compositionally biased region" description="Basic and acidic residues" evidence="4">
    <location>
        <begin position="34"/>
        <end position="52"/>
    </location>
</feature>
<feature type="compositionally biased region" description="Basic and acidic residues" evidence="4">
    <location>
        <begin position="60"/>
        <end position="77"/>
    </location>
</feature>
<feature type="compositionally biased region" description="Low complexity" evidence="4">
    <location>
        <begin position="88"/>
        <end position="106"/>
    </location>
</feature>
<feature type="compositionally biased region" description="Basic and acidic residues" evidence="4">
    <location>
        <begin position="123"/>
        <end position="139"/>
    </location>
</feature>
<feature type="compositionally biased region" description="Low complexity" evidence="4">
    <location>
        <begin position="165"/>
        <end position="174"/>
    </location>
</feature>
<feature type="compositionally biased region" description="Polar residues" evidence="4">
    <location>
        <begin position="180"/>
        <end position="190"/>
    </location>
</feature>
<feature type="compositionally biased region" description="Low complexity" evidence="4">
    <location>
        <begin position="207"/>
        <end position="220"/>
    </location>
</feature>
<feature type="compositionally biased region" description="Low complexity" evidence="4">
    <location>
        <begin position="248"/>
        <end position="260"/>
    </location>
</feature>
<feature type="compositionally biased region" description="Polar residues" evidence="4">
    <location>
        <begin position="261"/>
        <end position="290"/>
    </location>
</feature>
<feature type="compositionally biased region" description="Polar residues" evidence="4">
    <location>
        <begin position="306"/>
        <end position="327"/>
    </location>
</feature>
<feature type="compositionally biased region" description="Low complexity" evidence="4">
    <location>
        <begin position="335"/>
        <end position="346"/>
    </location>
</feature>
<feature type="compositionally biased region" description="Low complexity" evidence="4">
    <location>
        <begin position="363"/>
        <end position="380"/>
    </location>
</feature>
<feature type="compositionally biased region" description="Low complexity" evidence="4">
    <location>
        <begin position="416"/>
        <end position="425"/>
    </location>
</feature>
<feature type="compositionally biased region" description="Polar residues" evidence="4">
    <location>
        <begin position="438"/>
        <end position="451"/>
    </location>
</feature>
<feature type="compositionally biased region" description="Low complexity" evidence="4">
    <location>
        <begin position="475"/>
        <end position="486"/>
    </location>
</feature>
<feature type="compositionally biased region" description="Polar residues" evidence="4">
    <location>
        <begin position="504"/>
        <end position="528"/>
    </location>
</feature>
<feature type="compositionally biased region" description="Polar residues" evidence="4">
    <location>
        <begin position="564"/>
        <end position="575"/>
    </location>
</feature>
<feature type="compositionally biased region" description="Polar residues" evidence="4">
    <location>
        <begin position="611"/>
        <end position="623"/>
    </location>
</feature>
<feature type="compositionally biased region" description="Polar residues" evidence="4">
    <location>
        <begin position="655"/>
        <end position="667"/>
    </location>
</feature>
<feature type="compositionally biased region" description="Basic and acidic residues" evidence="4">
    <location>
        <begin position="675"/>
        <end position="688"/>
    </location>
</feature>
<feature type="compositionally biased region" description="Polar residues" evidence="4">
    <location>
        <begin position="774"/>
        <end position="783"/>
    </location>
</feature>
<feature type="compositionally biased region" description="Polar residues" evidence="4">
    <location>
        <begin position="793"/>
        <end position="804"/>
    </location>
</feature>
<feature type="compositionally biased region" description="Gly residues" evidence="4">
    <location>
        <begin position="809"/>
        <end position="824"/>
    </location>
</feature>
<feature type="compositionally biased region" description="Polar residues" evidence="4">
    <location>
        <begin position="846"/>
        <end position="857"/>
    </location>
</feature>
<feature type="compositionally biased region" description="Polar residues" evidence="4">
    <location>
        <begin position="934"/>
        <end position="950"/>
    </location>
</feature>
<feature type="compositionally biased region" description="Polar residues" evidence="4">
    <location>
        <begin position="964"/>
        <end position="975"/>
    </location>
</feature>
<feature type="compositionally biased region" description="Polar residues" evidence="4">
    <location>
        <begin position="1004"/>
        <end position="1027"/>
    </location>
</feature>
<feature type="compositionally biased region" description="Polar residues" evidence="4">
    <location>
        <begin position="1057"/>
        <end position="1072"/>
    </location>
</feature>
<feature type="compositionally biased region" description="Polar residues" evidence="4">
    <location>
        <begin position="1175"/>
        <end position="1195"/>
    </location>
</feature>
<feature type="compositionally biased region" description="Low complexity" evidence="4">
    <location>
        <begin position="1295"/>
        <end position="1307"/>
    </location>
</feature>
<feature type="compositionally biased region" description="Polar residues" evidence="4">
    <location>
        <begin position="1604"/>
        <end position="1617"/>
    </location>
</feature>
<feature type="compositionally biased region" description="Polar residues" evidence="4">
    <location>
        <begin position="1722"/>
        <end position="1733"/>
    </location>
</feature>
<feature type="compositionally biased region" description="Low complexity" evidence="4">
    <location>
        <begin position="1792"/>
        <end position="1801"/>
    </location>
</feature>
<feature type="modified residue" description="Phosphoserine" evidence="2">
    <location>
        <position position="913"/>
    </location>
</feature>
<feature type="modified residue" description="Phosphoserine" evidence="7">
    <location>
        <position position="1409"/>
    </location>
</feature>
<feature type="modified residue" description="Phosphothreonine" evidence="7">
    <location>
        <position position="1426"/>
    </location>
</feature>
<feature type="modified residue" description="Phosphoserine" evidence="7">
    <location>
        <position position="1438"/>
    </location>
</feature>
<feature type="modified residue" description="Phosphothreonine" evidence="7">
    <location>
        <position position="1441"/>
    </location>
</feature>
<feature type="modified residue" description="Phosphoserine" evidence="2">
    <location>
        <position position="1793"/>
    </location>
</feature>
<feature type="modified residue" description="Phosphoserine" evidence="2">
    <location>
        <position position="1809"/>
    </location>
</feature>
<feature type="splice variant" id="VSP_037294" description="In isoform 2." evidence="5">
    <location>
        <begin position="1"/>
        <end position="36"/>
    </location>
</feature>
<feature type="splice variant" id="VSP_037295" description="In isoform 2." evidence="5">
    <original>KQ</original>
    <variation>MR</variation>
    <location>
        <begin position="37"/>
        <end position="38"/>
    </location>
</feature>
<feature type="splice variant" id="VSP_037296" description="In isoform 2." evidence="5">
    <original>VWSKSTPPAP</original>
    <variation>GRYQLFSHRS</variation>
    <location>
        <begin position="970"/>
        <end position="979"/>
    </location>
</feature>
<feature type="splice variant" id="VSP_037297" description="In isoform 2." evidence="5">
    <location>
        <begin position="980"/>
        <end position="1810"/>
    </location>
</feature>
<feature type="sequence conflict" description="In Ref. 2; BAC34813." evidence="6" ref="2">
    <original>D</original>
    <variation>Y</variation>
    <location>
        <position position="904"/>
    </location>
</feature>
<feature type="sequence conflict" description="In Ref. 3; BAC65722." evidence="6" ref="3">
    <original>T</original>
    <variation>P</variation>
    <location>
        <position position="1576"/>
    </location>
</feature>